<comment type="function">
    <text evidence="1">Methylates precorrin-2 at the C-20 position to produce precorrin-3A.</text>
</comment>
<comment type="catalytic activity">
    <reaction>
        <text>precorrin-2 + S-adenosyl-L-methionine = precorrin-3A + S-adenosyl-L-homocysteine + H(+)</text>
        <dbReference type="Rhea" id="RHEA:16841"/>
        <dbReference type="ChEBI" id="CHEBI:15378"/>
        <dbReference type="ChEBI" id="CHEBI:57856"/>
        <dbReference type="ChEBI" id="CHEBI:58561"/>
        <dbReference type="ChEBI" id="CHEBI:58827"/>
        <dbReference type="ChEBI" id="CHEBI:59789"/>
        <dbReference type="EC" id="2.1.1.130"/>
    </reaction>
</comment>
<comment type="catalytic activity">
    <reaction>
        <text>precorrin-3B + S-adenosyl-L-methionine = precorrin-4 + S-adenosyl-L-homocysteine + 3 H(+)</text>
        <dbReference type="Rhea" id="RHEA:12761"/>
        <dbReference type="ChEBI" id="CHEBI:15378"/>
        <dbReference type="ChEBI" id="CHEBI:57769"/>
        <dbReference type="ChEBI" id="CHEBI:57856"/>
        <dbReference type="ChEBI" id="CHEBI:59789"/>
        <dbReference type="ChEBI" id="CHEBI:77870"/>
        <dbReference type="EC" id="2.1.1.131"/>
    </reaction>
</comment>
<comment type="pathway">
    <text>Cofactor biosynthesis; adenosylcobalamin biosynthesis; cob(II)yrinate a,c-diamide from precorrin-2 (aerobic route): step 1/10.</text>
</comment>
<comment type="pathway">
    <text>Cofactor biosynthesis; adenosylcobalamin biosynthesis; cob(II)yrinate a,c-diamide from precorrin-2 (aerobic route): step 3/10.</text>
</comment>
<comment type="similarity">
    <text evidence="3">Belongs to the precorrin methyltransferase family.</text>
</comment>
<accession>P9WGB3</accession>
<accession>L0TB91</accession>
<accession>P66877</accession>
<accession>Q10677</accession>
<proteinExistence type="evidence at protein level"/>
<gene>
    <name type="primary">cobIJ</name>
    <name type="synonym">cobI</name>
    <name type="ordered locus">Rv2066</name>
    <name type="ORF">MTCY49.05</name>
</gene>
<sequence>MSARGTLWGVGLGPGDPELVTVKAARVIGEADVVAYHSAPHGHSIARGIAEPYLRPGQLEEHLVYPVTTEATNHPGGYAGALEDFYADATERIATHLDAGRNVALLAEGDPLFYSSYMHLHTRLTRRFNAVIVPGVTSVSAASAAVATPLVAGDQVLSVLPGTLPVGELTRRLADADAAVVVKLGRSYHNVREALSASGLLGDAFYVERASTAGQRVLPAADVDETSVPYFSLAMLPGGRRRALLTGTVAVVGLGPGDSDWMTPQSRRELAAATDLIGYRGYLDRVEVRDGQRRHPSDNTDEPARARLACSLADQGRAVAVVSSGDPGVFAMATAVLEEAEQWPGVRVRVIPAMTAAQAVASRVGAPLGHDYAVISLSDRLKPWDVIAARLTAAAAADLVLAIYNPASVTRTWQVGAMRELLLAHRDPGIPVVIGRNVSGPVSGPNEDVRVVKLADLNPAEIDMRCLLIVGSSQTRWYSVDSQDRVFTPRRYPEAGRATATKSSRHSD</sequence>
<evidence type="ECO:0000250" key="1"/>
<evidence type="ECO:0000256" key="2">
    <source>
        <dbReference type="SAM" id="MobiDB-lite"/>
    </source>
</evidence>
<evidence type="ECO:0000305" key="3"/>
<name>COBIJ_MYCTU</name>
<protein>
    <recommendedName>
        <fullName>Cobalamin biosynthesis protein CobIJ</fullName>
    </recommendedName>
    <domain>
        <recommendedName>
            <fullName>Precorrin-2 C(20)-methyltransferase</fullName>
            <ecNumber>2.1.1.130</ecNumber>
        </recommendedName>
        <alternativeName>
            <fullName>S-adenosyl-L-methionine--precorrin-2 methyltransferase</fullName>
            <shortName>SP2MT</shortName>
        </alternativeName>
    </domain>
    <domain>
        <recommendedName>
            <fullName>Precorrin-3B C17-methyltransferase</fullName>
            <ecNumber>2.1.1.131</ecNumber>
        </recommendedName>
        <alternativeName>
            <fullName>S-adenosyl-L-methionine--precorrin-3B methyltransferase</fullName>
        </alternativeName>
    </domain>
</protein>
<reference key="1">
    <citation type="journal article" date="1998" name="Nature">
        <title>Deciphering the biology of Mycobacterium tuberculosis from the complete genome sequence.</title>
        <authorList>
            <person name="Cole S.T."/>
            <person name="Brosch R."/>
            <person name="Parkhill J."/>
            <person name="Garnier T."/>
            <person name="Churcher C.M."/>
            <person name="Harris D.E."/>
            <person name="Gordon S.V."/>
            <person name="Eiglmeier K."/>
            <person name="Gas S."/>
            <person name="Barry C.E. III"/>
            <person name="Tekaia F."/>
            <person name="Badcock K."/>
            <person name="Basham D."/>
            <person name="Brown D."/>
            <person name="Chillingworth T."/>
            <person name="Connor R."/>
            <person name="Davies R.M."/>
            <person name="Devlin K."/>
            <person name="Feltwell T."/>
            <person name="Gentles S."/>
            <person name="Hamlin N."/>
            <person name="Holroyd S."/>
            <person name="Hornsby T."/>
            <person name="Jagels K."/>
            <person name="Krogh A."/>
            <person name="McLean J."/>
            <person name="Moule S."/>
            <person name="Murphy L.D."/>
            <person name="Oliver S."/>
            <person name="Osborne J."/>
            <person name="Quail M.A."/>
            <person name="Rajandream M.A."/>
            <person name="Rogers J."/>
            <person name="Rutter S."/>
            <person name="Seeger K."/>
            <person name="Skelton S."/>
            <person name="Squares S."/>
            <person name="Squares R."/>
            <person name="Sulston J.E."/>
            <person name="Taylor K."/>
            <person name="Whitehead S."/>
            <person name="Barrell B.G."/>
        </authorList>
    </citation>
    <scope>NUCLEOTIDE SEQUENCE [LARGE SCALE GENOMIC DNA]</scope>
    <source>
        <strain>ATCC 25618 / H37Rv</strain>
    </source>
</reference>
<reference key="2">
    <citation type="journal article" date="2011" name="Mol. Cell. Proteomics">
        <title>Proteogenomic analysis of Mycobacterium tuberculosis by high resolution mass spectrometry.</title>
        <authorList>
            <person name="Kelkar D.S."/>
            <person name="Kumar D."/>
            <person name="Kumar P."/>
            <person name="Balakrishnan L."/>
            <person name="Muthusamy B."/>
            <person name="Yadav A.K."/>
            <person name="Shrivastava P."/>
            <person name="Marimuthu A."/>
            <person name="Anand S."/>
            <person name="Sundaram H."/>
            <person name="Kingsbury R."/>
            <person name="Harsha H.C."/>
            <person name="Nair B."/>
            <person name="Prasad T.S."/>
            <person name="Chauhan D.S."/>
            <person name="Katoch K."/>
            <person name="Katoch V.M."/>
            <person name="Kumar P."/>
            <person name="Chaerkady R."/>
            <person name="Ramachandran S."/>
            <person name="Dash D."/>
            <person name="Pandey A."/>
        </authorList>
    </citation>
    <scope>IDENTIFICATION BY MASS SPECTROMETRY [LARGE SCALE ANALYSIS]</scope>
    <source>
        <strain>ATCC 25618 / H37Rv</strain>
    </source>
</reference>
<organism>
    <name type="scientific">Mycobacterium tuberculosis (strain ATCC 25618 / H37Rv)</name>
    <dbReference type="NCBI Taxonomy" id="83332"/>
    <lineage>
        <taxon>Bacteria</taxon>
        <taxon>Bacillati</taxon>
        <taxon>Actinomycetota</taxon>
        <taxon>Actinomycetes</taxon>
        <taxon>Mycobacteriales</taxon>
        <taxon>Mycobacteriaceae</taxon>
        <taxon>Mycobacterium</taxon>
        <taxon>Mycobacterium tuberculosis complex</taxon>
    </lineage>
</organism>
<feature type="chain" id="PRO_0000150390" description="Cobalamin biosynthesis protein CobIJ">
    <location>
        <begin position="1"/>
        <end position="508"/>
    </location>
</feature>
<feature type="region of interest" description="Precorrin-2 C20-methyltransferase">
    <location>
        <begin position="1"/>
        <end position="243"/>
    </location>
</feature>
<feature type="region of interest" description="Precorrin-3 methylase">
    <location>
        <begin position="244"/>
        <end position="508"/>
    </location>
</feature>
<feature type="region of interest" description="Disordered" evidence="2">
    <location>
        <begin position="489"/>
        <end position="508"/>
    </location>
</feature>
<dbReference type="EC" id="2.1.1.130"/>
<dbReference type="EC" id="2.1.1.131"/>
<dbReference type="EMBL" id="AL123456">
    <property type="protein sequence ID" value="CCP44840.1"/>
    <property type="molecule type" value="Genomic_DNA"/>
</dbReference>
<dbReference type="PIR" id="E70764">
    <property type="entry name" value="E70764"/>
</dbReference>
<dbReference type="RefSeq" id="NP_216582.1">
    <property type="nucleotide sequence ID" value="NC_000962.3"/>
</dbReference>
<dbReference type="RefSeq" id="WP_003410659.1">
    <property type="nucleotide sequence ID" value="NZ_NVQJ01000047.1"/>
</dbReference>
<dbReference type="SMR" id="P9WGB3"/>
<dbReference type="FunCoup" id="P9WGB3">
    <property type="interactions" value="132"/>
</dbReference>
<dbReference type="STRING" id="83332.Rv2066"/>
<dbReference type="PaxDb" id="83332-Rv2066"/>
<dbReference type="GeneID" id="888483"/>
<dbReference type="KEGG" id="mtu:Rv2066"/>
<dbReference type="KEGG" id="mtv:RVBD_2066"/>
<dbReference type="TubercuList" id="Rv2066"/>
<dbReference type="eggNOG" id="COG1010">
    <property type="taxonomic scope" value="Bacteria"/>
</dbReference>
<dbReference type="eggNOG" id="COG2243">
    <property type="taxonomic scope" value="Bacteria"/>
</dbReference>
<dbReference type="InParanoid" id="P9WGB3"/>
<dbReference type="OrthoDB" id="9804789at2"/>
<dbReference type="PhylomeDB" id="P9WGB3"/>
<dbReference type="UniPathway" id="UPA00148">
    <property type="reaction ID" value="UER00212"/>
</dbReference>
<dbReference type="UniPathway" id="UPA00148">
    <property type="reaction ID" value="UER00214"/>
</dbReference>
<dbReference type="Proteomes" id="UP000001584">
    <property type="component" value="Chromosome"/>
</dbReference>
<dbReference type="GO" id="GO:0005886">
    <property type="term" value="C:plasma membrane"/>
    <property type="evidence" value="ECO:0007005"/>
    <property type="project" value="MTBBASE"/>
</dbReference>
<dbReference type="GO" id="GO:0030788">
    <property type="term" value="F:precorrin-2 C20-methyltransferase activity"/>
    <property type="evidence" value="ECO:0007669"/>
    <property type="project" value="UniProtKB-EC"/>
</dbReference>
<dbReference type="GO" id="GO:0030789">
    <property type="term" value="F:precorrin-3B C17-methyltransferase activity"/>
    <property type="evidence" value="ECO:0007669"/>
    <property type="project" value="UniProtKB-EC"/>
</dbReference>
<dbReference type="GO" id="GO:0009236">
    <property type="term" value="P:cobalamin biosynthetic process"/>
    <property type="evidence" value="ECO:0007669"/>
    <property type="project" value="UniProtKB-UniPathway"/>
</dbReference>
<dbReference type="GO" id="GO:0032259">
    <property type="term" value="P:methylation"/>
    <property type="evidence" value="ECO:0007669"/>
    <property type="project" value="UniProtKB-KW"/>
</dbReference>
<dbReference type="CDD" id="cd11645">
    <property type="entry name" value="Precorrin_2_C20_MT"/>
    <property type="match status" value="1"/>
</dbReference>
<dbReference type="CDD" id="cd11646">
    <property type="entry name" value="Precorrin_3B_C17_MT"/>
    <property type="match status" value="1"/>
</dbReference>
<dbReference type="FunFam" id="3.40.1010.10:FF:000009">
    <property type="entry name" value="ATP-binding protein"/>
    <property type="match status" value="1"/>
</dbReference>
<dbReference type="FunFam" id="3.30.950.10:FF:000013">
    <property type="entry name" value="Bifunctional S-adenosyl-L-methionine-precorrin-2 methyl transferase/precorrin-3 methylase"/>
    <property type="match status" value="1"/>
</dbReference>
<dbReference type="FunFam" id="3.30.950.10:FF:000014">
    <property type="entry name" value="Bifunctional S-adenosyl-L-methionine-precorrin-2 methyl transferase/precorrin-3 methylase"/>
    <property type="match status" value="1"/>
</dbReference>
<dbReference type="FunFam" id="3.40.1010.10:FF:000010">
    <property type="entry name" value="Cobalamin biosynthesis protein CobIJ"/>
    <property type="match status" value="1"/>
</dbReference>
<dbReference type="Gene3D" id="3.40.1010.10">
    <property type="entry name" value="Cobalt-precorrin-4 Transmethylase, Domain 1"/>
    <property type="match status" value="2"/>
</dbReference>
<dbReference type="Gene3D" id="3.30.950.10">
    <property type="entry name" value="Methyltransferase, Cobalt-precorrin-4 Transmethylase, Domain 2"/>
    <property type="match status" value="2"/>
</dbReference>
<dbReference type="InterPro" id="IPR000878">
    <property type="entry name" value="4pyrrol_Mease"/>
</dbReference>
<dbReference type="InterPro" id="IPR035996">
    <property type="entry name" value="4pyrrol_Methylase_sf"/>
</dbReference>
<dbReference type="InterPro" id="IPR014777">
    <property type="entry name" value="4pyrrole_Mease_sub1"/>
</dbReference>
<dbReference type="InterPro" id="IPR014776">
    <property type="entry name" value="4pyrrole_Mease_sub2"/>
</dbReference>
<dbReference type="InterPro" id="IPR006363">
    <property type="entry name" value="Cbl_synth_CobJ/CibH_dom"/>
</dbReference>
<dbReference type="InterPro" id="IPR012382">
    <property type="entry name" value="CobI/CbiL"/>
</dbReference>
<dbReference type="InterPro" id="IPR006364">
    <property type="entry name" value="CobI/CbiL/CobIJ_dom"/>
</dbReference>
<dbReference type="InterPro" id="IPR051810">
    <property type="entry name" value="Precorrin_MeTrfase"/>
</dbReference>
<dbReference type="InterPro" id="IPR003043">
    <property type="entry name" value="Uropor_MeTrfase_CS"/>
</dbReference>
<dbReference type="NCBIfam" id="TIGR01467">
    <property type="entry name" value="cobI_cbiL"/>
    <property type="match status" value="1"/>
</dbReference>
<dbReference type="NCBIfam" id="TIGR01466">
    <property type="entry name" value="cobJ_cbiH"/>
    <property type="match status" value="1"/>
</dbReference>
<dbReference type="NCBIfam" id="NF004647">
    <property type="entry name" value="PRK05990.1"/>
    <property type="match status" value="1"/>
</dbReference>
<dbReference type="PANTHER" id="PTHR47036">
    <property type="entry name" value="COBALT-FACTOR III C(17)-METHYLTRANSFERASE-RELATED"/>
    <property type="match status" value="1"/>
</dbReference>
<dbReference type="PANTHER" id="PTHR47036:SF1">
    <property type="entry name" value="COBALT-FACTOR III C(17)-METHYLTRANSFERASE-RELATED"/>
    <property type="match status" value="1"/>
</dbReference>
<dbReference type="Pfam" id="PF00590">
    <property type="entry name" value="TP_methylase"/>
    <property type="match status" value="2"/>
</dbReference>
<dbReference type="SUPFAM" id="SSF53790">
    <property type="entry name" value="Tetrapyrrole methylase"/>
    <property type="match status" value="2"/>
</dbReference>
<dbReference type="PROSITE" id="PS00839">
    <property type="entry name" value="SUMT_1"/>
    <property type="match status" value="1"/>
</dbReference>
<dbReference type="PROSITE" id="PS00840">
    <property type="entry name" value="SUMT_2"/>
    <property type="match status" value="1"/>
</dbReference>
<keyword id="KW-0169">Cobalamin biosynthesis</keyword>
<keyword id="KW-0489">Methyltransferase</keyword>
<keyword id="KW-0511">Multifunctional enzyme</keyword>
<keyword id="KW-1185">Reference proteome</keyword>
<keyword id="KW-0949">S-adenosyl-L-methionine</keyword>
<keyword id="KW-0808">Transferase</keyword>